<sequence>MFSFVDLRLLLLLGATALLTHGQEDIPEVSCIHNGLRVPNGETWKPDVCLICICHNGTAVCDGVLCKEDLDCPNPQKREGECCPFCPEEYVSPDAEVIGVEGPKGDPGPQGPRGPVGPPGQDGIPGQPGLPGPPGPPGPPGPPGLGGNFASQMSYGYDEKSAGVSVPGPMGPSGPRGLPGPPGAPGPQGFQGPPGEPGEPGASGPMGPRGPPGPPGKNGDDGEAGKPGRPGERGPPGPQGARGLPGTAGLPGMKGHRGFSGLDGAKGDTGPAGPKGEPGSPGENGAPGQMGPRGLPGERGRPGPPGSAGARGNDGAVGAAGPPGPTGPTGPPGFPGAAGAKGEAGPQGARGSEGPQGVRGEPGPPGPAGAAGPAGNPGADGQPGAKGANGAPGIAGAPGFPGARGPSGPQGPSGAPGPKGNSGEPGAPGNKGDTGAKGEPGPAGVQGPPGPAGEEGKRGARGEPGPSGLPGPPGERGGPGSRGFPGADGVAGPKGPAGERGSPGPAGPKGSPGEAGRPGEAGLPGAKGLTGSPGSPGPDGKTGPPGPAGQDGRPGPAGPPGARGQAGVMGFPGPKGTAGEPGKAGERGVPGPPGAVGPAGKDGEAGAQGAPGPAGPAGERGEQGPAGSPGFQGLPGPAGPPGEAGKPGEQGVPGDLGAPGPSGARGERGFPGERGVQGPPGPAGPRGNNGAPGNDGAKGDTGAPGAPGSQGAPGLQGMPGERGAAGLPGPKGDRGDAGPKGADGSPGKDGVRGLTGPIGPPGPAGAPGDKGETGPSGPAGPTGARGAPGDRGEPGPPGPAGFAGPPGADGQPGAKGEPGDTGVKGDAGPPGPAGPAGPPGPIGNVGAPGPKGSRGAAGPPGATGFPGAAGRVGPPGPSGNAGPPGPPGPVGKEGGKGPRGETGPAGRPGEVGPPGPPGPAGEKGSPGADGPAGSPGTPGPQGIAGQRGVVGLPGQRGERGFPGLPGPSGEPGKQGPSGASGERGPPGPMGPPGLAGPPGESGREGSPGAEGSPGRDGAPGAKGDRGETGPAGPPGAPGAPGAPGPVGPAGKNGDRGETGPAGPAGPIGPAGARGPAGPQGPRGDKGETGEQGDRGIKGHRGFSGLQGPPGSPGSPGEQGPSGASGPAGPRGPPGSAGSPGKDGLNGLPGPIGPPGPRGRTGDSGPAGPPGPPGPPGPPGPPSGGYDFSFLPQPPQEKSQDGGRYYRADDANVVRDRDLEVDTTLKSLSQQIENIRSPEGSRKNPARTCRDLKMCHSDWKSGEYWIDPNQGCNLDAIKVYCNMETGQTCVFPTQPSVPQKNWYISPNPKEKKHVWFGESMTDGFQFEYGSEGSDPADVAIQLTFLRLMSTEASQNITYHCKNSVAYMDQQTGNLKKSLLLQGSNEIELRGEGNSRFTYSTLVDGCTSHTGTWGKTVIEYKTTKTSRLPIIDVAPLDIGAPDQEFGMDIGPACFV</sequence>
<proteinExistence type="evidence at protein level"/>
<keyword id="KW-0002">3D-structure</keyword>
<keyword id="KW-0106">Calcium</keyword>
<keyword id="KW-0176">Collagen</keyword>
<keyword id="KW-0903">Direct protein sequencing</keyword>
<keyword id="KW-1015">Disulfide bond</keyword>
<keyword id="KW-0272">Extracellular matrix</keyword>
<keyword id="KW-0325">Glycoprotein</keyword>
<keyword id="KW-0379">Hydroxylation</keyword>
<keyword id="KW-0479">Metal-binding</keyword>
<keyword id="KW-0597">Phosphoprotein</keyword>
<keyword id="KW-0873">Pyrrolidone carboxylic acid</keyword>
<keyword id="KW-1185">Reference proteome</keyword>
<keyword id="KW-0677">Repeat</keyword>
<keyword id="KW-0964">Secreted</keyword>
<keyword id="KW-0732">Signal</keyword>
<protein>
    <recommendedName>
        <fullName>Collagen alpha-1(I) chain</fullName>
    </recommendedName>
    <alternativeName>
        <fullName>Alpha-1 type I collagen</fullName>
    </alternativeName>
</protein>
<dbReference type="EMBL" id="Z78279">
    <property type="protein sequence ID" value="CAB01633.1"/>
    <property type="molecule type" value="mRNA"/>
</dbReference>
<dbReference type="EMBL" id="CH473948">
    <property type="protein sequence ID" value="EDM05727.1"/>
    <property type="molecule type" value="Genomic_DNA"/>
</dbReference>
<dbReference type="EMBL" id="BC133728">
    <property type="protein sequence ID" value="AAI33729.1"/>
    <property type="molecule type" value="mRNA"/>
</dbReference>
<dbReference type="EMBL" id="M11432">
    <property type="protein sequence ID" value="AAA40832.1"/>
    <property type="status" value="ALT_SEQ"/>
    <property type="molecule type" value="mRNA"/>
</dbReference>
<dbReference type="PIR" id="A90559">
    <property type="entry name" value="CGRT1S"/>
</dbReference>
<dbReference type="RefSeq" id="NP_445756.1">
    <property type="nucleotide sequence ID" value="NM_053304.1"/>
</dbReference>
<dbReference type="PDB" id="3HQV">
    <property type="method" value="Fiber"/>
    <property type="resolution" value="5.16 A"/>
    <property type="chains" value="A/C=152-1207"/>
</dbReference>
<dbReference type="PDB" id="3HR2">
    <property type="method" value="Fiber"/>
    <property type="resolution" value="5.16 A"/>
    <property type="chains" value="A/C=152-1207"/>
</dbReference>
<dbReference type="PDBsum" id="3HQV"/>
<dbReference type="PDBsum" id="3HR2"/>
<dbReference type="SMR" id="P02454"/>
<dbReference type="BioGRID" id="248045">
    <property type="interactions" value="4"/>
</dbReference>
<dbReference type="ComplexPortal" id="CPX-3104">
    <property type="entry name" value="Collagen type I trimer"/>
</dbReference>
<dbReference type="DIP" id="DIP-36887N"/>
<dbReference type="FunCoup" id="P02454">
    <property type="interactions" value="597"/>
</dbReference>
<dbReference type="IntAct" id="P02454">
    <property type="interactions" value="6"/>
</dbReference>
<dbReference type="STRING" id="10116.ENSRNOP00000005311"/>
<dbReference type="GlyCosmos" id="P02454">
    <property type="glycosylation" value="4 sites, No reported glycans"/>
</dbReference>
<dbReference type="GlyGen" id="P02454">
    <property type="glycosylation" value="8 sites"/>
</dbReference>
<dbReference type="iPTMnet" id="P02454"/>
<dbReference type="PhosphoSitePlus" id="P02454"/>
<dbReference type="jPOST" id="P02454"/>
<dbReference type="PaxDb" id="10116-ENSRNOP00000005311"/>
<dbReference type="Ensembl" id="ENSRNOT00000005311.7">
    <property type="protein sequence ID" value="ENSRNOP00000005311.5"/>
    <property type="gene ID" value="ENSRNOG00000003897.7"/>
</dbReference>
<dbReference type="GeneID" id="29393"/>
<dbReference type="KEGG" id="rno:29393"/>
<dbReference type="UCSC" id="RGD:61817">
    <property type="organism name" value="rat"/>
</dbReference>
<dbReference type="AGR" id="RGD:61817"/>
<dbReference type="CTD" id="1277"/>
<dbReference type="RGD" id="61817">
    <property type="gene designation" value="Col1a1"/>
</dbReference>
<dbReference type="eggNOG" id="KOG3544">
    <property type="taxonomic scope" value="Eukaryota"/>
</dbReference>
<dbReference type="GeneTree" id="ENSGT00940000156584"/>
<dbReference type="HOGENOM" id="CLU_001074_2_3_1"/>
<dbReference type="InParanoid" id="P02454"/>
<dbReference type="OMA" id="YYDRDVW"/>
<dbReference type="OrthoDB" id="8939548at2759"/>
<dbReference type="PhylomeDB" id="P02454"/>
<dbReference type="TreeFam" id="TF344135"/>
<dbReference type="Reactome" id="R-RNO-114604">
    <property type="pathway name" value="GPVI-mediated activation cascade"/>
</dbReference>
<dbReference type="Reactome" id="R-RNO-1442490">
    <property type="pathway name" value="Collagen degradation"/>
</dbReference>
<dbReference type="Reactome" id="R-RNO-1474244">
    <property type="pathway name" value="Extracellular matrix organization"/>
</dbReference>
<dbReference type="Reactome" id="R-RNO-1650814">
    <property type="pathway name" value="Collagen biosynthesis and modifying enzymes"/>
</dbReference>
<dbReference type="Reactome" id="R-RNO-198933">
    <property type="pathway name" value="Immunoregulatory interactions between a Lymphoid and a non-Lymphoid cell"/>
</dbReference>
<dbReference type="Reactome" id="R-RNO-2022090">
    <property type="pathway name" value="Assembly of collagen fibrils and other multimeric structures"/>
</dbReference>
<dbReference type="Reactome" id="R-RNO-202733">
    <property type="pathway name" value="Cell surface interactions at the vascular wall"/>
</dbReference>
<dbReference type="Reactome" id="R-RNO-216083">
    <property type="pathway name" value="Integrin cell surface interactions"/>
</dbReference>
<dbReference type="Reactome" id="R-RNO-2243919">
    <property type="pathway name" value="Crosslinking of collagen fibrils"/>
</dbReference>
<dbReference type="Reactome" id="R-RNO-3000171">
    <property type="pathway name" value="Non-integrin membrane-ECM interactions"/>
</dbReference>
<dbReference type="Reactome" id="R-RNO-3000178">
    <property type="pathway name" value="ECM proteoglycans"/>
</dbReference>
<dbReference type="Reactome" id="R-RNO-430116">
    <property type="pathway name" value="GP1b-IX-V activation signalling"/>
</dbReference>
<dbReference type="Reactome" id="R-RNO-75892">
    <property type="pathway name" value="Platelet Adhesion to exposed collagen"/>
</dbReference>
<dbReference type="Reactome" id="R-RNO-76009">
    <property type="pathway name" value="Platelet Aggregation (Plug Formation)"/>
</dbReference>
<dbReference type="Reactome" id="R-RNO-8874081">
    <property type="pathway name" value="MET activates PTK2 signaling"/>
</dbReference>
<dbReference type="Reactome" id="R-RNO-8948216">
    <property type="pathway name" value="Collagen chain trimerization"/>
</dbReference>
<dbReference type="EvolutionaryTrace" id="P02454"/>
<dbReference type="PRO" id="PR:P02454"/>
<dbReference type="Proteomes" id="UP000002494">
    <property type="component" value="Chromosome 10"/>
</dbReference>
<dbReference type="Proteomes" id="UP000234681">
    <property type="component" value="Chromosome 10"/>
</dbReference>
<dbReference type="Bgee" id="ENSRNOG00000003897">
    <property type="expression patterns" value="Expressed in quadriceps femoris and 18 other cell types or tissues"/>
</dbReference>
<dbReference type="GO" id="GO:0005581">
    <property type="term" value="C:collagen trimer"/>
    <property type="evidence" value="ECO:0000266"/>
    <property type="project" value="RGD"/>
</dbReference>
<dbReference type="GO" id="GO:0005584">
    <property type="term" value="C:collagen type I trimer"/>
    <property type="evidence" value="ECO:0000266"/>
    <property type="project" value="RGD"/>
</dbReference>
<dbReference type="GO" id="GO:0062023">
    <property type="term" value="C:collagen-containing extracellular matrix"/>
    <property type="evidence" value="ECO:0000318"/>
    <property type="project" value="GO_Central"/>
</dbReference>
<dbReference type="GO" id="GO:0005737">
    <property type="term" value="C:cytoplasm"/>
    <property type="evidence" value="ECO:0000266"/>
    <property type="project" value="RGD"/>
</dbReference>
<dbReference type="GO" id="GO:0031012">
    <property type="term" value="C:extracellular matrix"/>
    <property type="evidence" value="ECO:0000266"/>
    <property type="project" value="RGD"/>
</dbReference>
<dbReference type="GO" id="GO:0005576">
    <property type="term" value="C:extracellular region"/>
    <property type="evidence" value="ECO:0000304"/>
    <property type="project" value="Reactome"/>
</dbReference>
<dbReference type="GO" id="GO:0005615">
    <property type="term" value="C:extracellular space"/>
    <property type="evidence" value="ECO:0000314"/>
    <property type="project" value="RGD"/>
</dbReference>
<dbReference type="GO" id="GO:0030141">
    <property type="term" value="C:secretory granule"/>
    <property type="evidence" value="ECO:0000314"/>
    <property type="project" value="RGD"/>
</dbReference>
<dbReference type="GO" id="GO:0005201">
    <property type="term" value="F:extracellular matrix structural constituent"/>
    <property type="evidence" value="ECO:0000266"/>
    <property type="project" value="RGD"/>
</dbReference>
<dbReference type="GO" id="GO:0030020">
    <property type="term" value="F:extracellular matrix structural constituent conferring tensile strength"/>
    <property type="evidence" value="ECO:0000318"/>
    <property type="project" value="GO_Central"/>
</dbReference>
<dbReference type="GO" id="GO:0042802">
    <property type="term" value="F:identical protein binding"/>
    <property type="evidence" value="ECO:0000266"/>
    <property type="project" value="RGD"/>
</dbReference>
<dbReference type="GO" id="GO:0046872">
    <property type="term" value="F:metal ion binding"/>
    <property type="evidence" value="ECO:0007669"/>
    <property type="project" value="UniProtKB-KW"/>
</dbReference>
<dbReference type="GO" id="GO:0048407">
    <property type="term" value="F:platelet-derived growth factor binding"/>
    <property type="evidence" value="ECO:0000266"/>
    <property type="project" value="RGD"/>
</dbReference>
<dbReference type="GO" id="GO:0002020">
    <property type="term" value="F:protease binding"/>
    <property type="evidence" value="ECO:0000266"/>
    <property type="project" value="RGD"/>
</dbReference>
<dbReference type="GO" id="GO:0001568">
    <property type="term" value="P:blood vessel development"/>
    <property type="evidence" value="ECO:0000266"/>
    <property type="project" value="RGD"/>
</dbReference>
<dbReference type="GO" id="GO:0060346">
    <property type="term" value="P:bone trabecula formation"/>
    <property type="evidence" value="ECO:0000266"/>
    <property type="project" value="RGD"/>
</dbReference>
<dbReference type="GO" id="GO:0060351">
    <property type="term" value="P:cartilage development involved in endochondral bone morphogenesis"/>
    <property type="evidence" value="ECO:0000266"/>
    <property type="project" value="RGD"/>
</dbReference>
<dbReference type="GO" id="GO:0071230">
    <property type="term" value="P:cellular response to amino acid stimulus"/>
    <property type="evidence" value="ECO:0000266"/>
    <property type="project" value="RGD"/>
</dbReference>
<dbReference type="GO" id="GO:0071364">
    <property type="term" value="P:cellular response to epidermal growth factor stimulus"/>
    <property type="evidence" value="ECO:0000270"/>
    <property type="project" value="RGD"/>
</dbReference>
<dbReference type="GO" id="GO:0044344">
    <property type="term" value="P:cellular response to fibroblast growth factor stimulus"/>
    <property type="evidence" value="ECO:0000270"/>
    <property type="project" value="RGD"/>
</dbReference>
<dbReference type="GO" id="GO:1902618">
    <property type="term" value="P:cellular response to fluoride"/>
    <property type="evidence" value="ECO:0000270"/>
    <property type="project" value="RGD"/>
</dbReference>
<dbReference type="GO" id="GO:0071333">
    <property type="term" value="P:cellular response to glucose stimulus"/>
    <property type="evidence" value="ECO:0000270"/>
    <property type="project" value="RGD"/>
</dbReference>
<dbReference type="GO" id="GO:0071260">
    <property type="term" value="P:cellular response to mechanical stimulus"/>
    <property type="evidence" value="ECO:0000270"/>
    <property type="project" value="RGD"/>
</dbReference>
<dbReference type="GO" id="GO:0071300">
    <property type="term" value="P:cellular response to retinoic acid"/>
    <property type="evidence" value="ECO:0000270"/>
    <property type="project" value="RGD"/>
</dbReference>
<dbReference type="GO" id="GO:0071560">
    <property type="term" value="P:cellular response to transforming growth factor beta stimulus"/>
    <property type="evidence" value="ECO:0000270"/>
    <property type="project" value="UniProtKB"/>
</dbReference>
<dbReference type="GO" id="GO:0071356">
    <property type="term" value="P:cellular response to tumor necrosis factor"/>
    <property type="evidence" value="ECO:0000270"/>
    <property type="project" value="RGD"/>
</dbReference>
<dbReference type="GO" id="GO:0071306">
    <property type="term" value="P:cellular response to vitamin E"/>
    <property type="evidence" value="ECO:0000270"/>
    <property type="project" value="RGD"/>
</dbReference>
<dbReference type="GO" id="GO:0032964">
    <property type="term" value="P:collagen biosynthetic process"/>
    <property type="evidence" value="ECO:0000266"/>
    <property type="project" value="RGD"/>
</dbReference>
<dbReference type="GO" id="GO:0030199">
    <property type="term" value="P:collagen fibril organization"/>
    <property type="evidence" value="ECO:0000266"/>
    <property type="project" value="RGD"/>
</dbReference>
<dbReference type="GO" id="GO:0038063">
    <property type="term" value="P:collagen-activated tyrosine kinase receptor signaling pathway"/>
    <property type="evidence" value="ECO:0000314"/>
    <property type="project" value="MGI"/>
</dbReference>
<dbReference type="GO" id="GO:0048706">
    <property type="term" value="P:embryonic skeletal system development"/>
    <property type="evidence" value="ECO:0000266"/>
    <property type="project" value="RGD"/>
</dbReference>
<dbReference type="GO" id="GO:0001958">
    <property type="term" value="P:endochondral ossification"/>
    <property type="evidence" value="ECO:0000266"/>
    <property type="project" value="RGD"/>
</dbReference>
<dbReference type="GO" id="GO:0060325">
    <property type="term" value="P:face morphogenesis"/>
    <property type="evidence" value="ECO:0000266"/>
    <property type="project" value="RGD"/>
</dbReference>
<dbReference type="GO" id="GO:0001957">
    <property type="term" value="P:intramembranous ossification"/>
    <property type="evidence" value="ECO:0000266"/>
    <property type="project" value="RGD"/>
</dbReference>
<dbReference type="GO" id="GO:0010812">
    <property type="term" value="P:negative regulation of cell-substrate adhesion"/>
    <property type="evidence" value="ECO:0000266"/>
    <property type="project" value="RGD"/>
</dbReference>
<dbReference type="GO" id="GO:0001503">
    <property type="term" value="P:ossification"/>
    <property type="evidence" value="ECO:0000270"/>
    <property type="project" value="RGD"/>
</dbReference>
<dbReference type="GO" id="GO:0001649">
    <property type="term" value="P:osteoblast differentiation"/>
    <property type="evidence" value="ECO:0000266"/>
    <property type="project" value="RGD"/>
</dbReference>
<dbReference type="GO" id="GO:0090263">
    <property type="term" value="P:positive regulation of canonical Wnt signaling pathway"/>
    <property type="evidence" value="ECO:0000266"/>
    <property type="project" value="RGD"/>
</dbReference>
<dbReference type="GO" id="GO:0030335">
    <property type="term" value="P:positive regulation of cell migration"/>
    <property type="evidence" value="ECO:0000266"/>
    <property type="project" value="RGD"/>
</dbReference>
<dbReference type="GO" id="GO:0045893">
    <property type="term" value="P:positive regulation of DNA-templated transcription"/>
    <property type="evidence" value="ECO:0000266"/>
    <property type="project" value="RGD"/>
</dbReference>
<dbReference type="GO" id="GO:0010718">
    <property type="term" value="P:positive regulation of epithelial to mesenchymal transition"/>
    <property type="evidence" value="ECO:0000266"/>
    <property type="project" value="RGD"/>
</dbReference>
<dbReference type="GO" id="GO:0034504">
    <property type="term" value="P:protein localization to nucleus"/>
    <property type="evidence" value="ECO:0000266"/>
    <property type="project" value="RGD"/>
</dbReference>
<dbReference type="GO" id="GO:0015031">
    <property type="term" value="P:protein transport"/>
    <property type="evidence" value="ECO:0000266"/>
    <property type="project" value="RGD"/>
</dbReference>
<dbReference type="GO" id="GO:0051591">
    <property type="term" value="P:response to cAMP"/>
    <property type="evidence" value="ECO:0000270"/>
    <property type="project" value="RGD"/>
</dbReference>
<dbReference type="GO" id="GO:0032355">
    <property type="term" value="P:response to estradiol"/>
    <property type="evidence" value="ECO:0000270"/>
    <property type="project" value="RGD"/>
</dbReference>
<dbReference type="GO" id="GO:1902617">
    <property type="term" value="P:response to fluoride"/>
    <property type="evidence" value="ECO:0000270"/>
    <property type="project" value="RGD"/>
</dbReference>
<dbReference type="GO" id="GO:0042542">
    <property type="term" value="P:response to hydrogen peroxide"/>
    <property type="evidence" value="ECO:0000270"/>
    <property type="project" value="RGD"/>
</dbReference>
<dbReference type="GO" id="GO:0055093">
    <property type="term" value="P:response to hyperoxia"/>
    <property type="evidence" value="ECO:0000270"/>
    <property type="project" value="RGD"/>
</dbReference>
<dbReference type="GO" id="GO:0032868">
    <property type="term" value="P:response to insulin"/>
    <property type="evidence" value="ECO:0000270"/>
    <property type="project" value="RGD"/>
</dbReference>
<dbReference type="GO" id="GO:0009612">
    <property type="term" value="P:response to mechanical stimulus"/>
    <property type="evidence" value="ECO:0000270"/>
    <property type="project" value="RGD"/>
</dbReference>
<dbReference type="GO" id="GO:0007584">
    <property type="term" value="P:response to nutrient"/>
    <property type="evidence" value="ECO:0000270"/>
    <property type="project" value="RGD"/>
</dbReference>
<dbReference type="GO" id="GO:0031667">
    <property type="term" value="P:response to nutrient levels"/>
    <property type="evidence" value="ECO:0000270"/>
    <property type="project" value="RGD"/>
</dbReference>
<dbReference type="GO" id="GO:0043434">
    <property type="term" value="P:response to peptide hormone"/>
    <property type="evidence" value="ECO:0000270"/>
    <property type="project" value="RGD"/>
</dbReference>
<dbReference type="GO" id="GO:0048545">
    <property type="term" value="P:response to steroid hormone"/>
    <property type="evidence" value="ECO:0000270"/>
    <property type="project" value="RGD"/>
</dbReference>
<dbReference type="GO" id="GO:0009410">
    <property type="term" value="P:response to xenobiotic stimulus"/>
    <property type="evidence" value="ECO:0000270"/>
    <property type="project" value="RGD"/>
</dbReference>
<dbReference type="GO" id="GO:0007605">
    <property type="term" value="P:sensory perception of sound"/>
    <property type="evidence" value="ECO:0000266"/>
    <property type="project" value="RGD"/>
</dbReference>
<dbReference type="GO" id="GO:0001501">
    <property type="term" value="P:skeletal system development"/>
    <property type="evidence" value="ECO:0000266"/>
    <property type="project" value="RGD"/>
</dbReference>
<dbReference type="GO" id="GO:0048705">
    <property type="term" value="P:skeletal system morphogenesis"/>
    <property type="evidence" value="ECO:0000266"/>
    <property type="project" value="RGD"/>
</dbReference>
<dbReference type="GO" id="GO:0043588">
    <property type="term" value="P:skin development"/>
    <property type="evidence" value="ECO:0000266"/>
    <property type="project" value="RGD"/>
</dbReference>
<dbReference type="GO" id="GO:0043589">
    <property type="term" value="P:skin morphogenesis"/>
    <property type="evidence" value="ECO:0000266"/>
    <property type="project" value="RGD"/>
</dbReference>
<dbReference type="GO" id="GO:0034505">
    <property type="term" value="P:tooth mineralization"/>
    <property type="evidence" value="ECO:0000266"/>
    <property type="project" value="RGD"/>
</dbReference>
<dbReference type="GO" id="GO:0007601">
    <property type="term" value="P:visual perception"/>
    <property type="evidence" value="ECO:0000266"/>
    <property type="project" value="RGD"/>
</dbReference>
<dbReference type="FunFam" id="2.60.120.1000:FF:000001">
    <property type="entry name" value="Collagen alpha-1 type I chain"/>
    <property type="match status" value="1"/>
</dbReference>
<dbReference type="Gene3D" id="2.60.120.1000">
    <property type="match status" value="1"/>
</dbReference>
<dbReference type="Gene3D" id="2.10.70.10">
    <property type="entry name" value="Complement Module, domain 1"/>
    <property type="match status" value="1"/>
</dbReference>
<dbReference type="InterPro" id="IPR008160">
    <property type="entry name" value="Collagen"/>
</dbReference>
<dbReference type="InterPro" id="IPR050149">
    <property type="entry name" value="Collagen_superfamily"/>
</dbReference>
<dbReference type="InterPro" id="IPR000885">
    <property type="entry name" value="Fib_collagen_C"/>
</dbReference>
<dbReference type="InterPro" id="IPR001007">
    <property type="entry name" value="VWF_dom"/>
</dbReference>
<dbReference type="PANTHER" id="PTHR24023">
    <property type="entry name" value="COLLAGEN ALPHA"/>
    <property type="match status" value="1"/>
</dbReference>
<dbReference type="PANTHER" id="PTHR24023:SF1082">
    <property type="entry name" value="COLLAGEN TRIPLE HELIX REPEAT"/>
    <property type="match status" value="1"/>
</dbReference>
<dbReference type="Pfam" id="PF01410">
    <property type="entry name" value="COLFI"/>
    <property type="match status" value="1"/>
</dbReference>
<dbReference type="Pfam" id="PF01391">
    <property type="entry name" value="Collagen"/>
    <property type="match status" value="9"/>
</dbReference>
<dbReference type="Pfam" id="PF00093">
    <property type="entry name" value="VWC"/>
    <property type="match status" value="1"/>
</dbReference>
<dbReference type="SMART" id="SM00038">
    <property type="entry name" value="COLFI"/>
    <property type="match status" value="1"/>
</dbReference>
<dbReference type="SMART" id="SM00214">
    <property type="entry name" value="VWC"/>
    <property type="match status" value="1"/>
</dbReference>
<dbReference type="SUPFAM" id="SSF57603">
    <property type="entry name" value="FnI-like domain"/>
    <property type="match status" value="1"/>
</dbReference>
<dbReference type="PROSITE" id="PS51461">
    <property type="entry name" value="NC1_FIB"/>
    <property type="match status" value="1"/>
</dbReference>
<dbReference type="PROSITE" id="PS01208">
    <property type="entry name" value="VWFC_1"/>
    <property type="match status" value="1"/>
</dbReference>
<dbReference type="PROSITE" id="PS50184">
    <property type="entry name" value="VWFC_2"/>
    <property type="match status" value="1"/>
</dbReference>
<comment type="function">
    <text>Type I collagen is a member of group I collagen (fibrillar forming collagen).</text>
</comment>
<comment type="subunit">
    <text evidence="2 3 10">Trimers of one alpha 2(I) and two alpha 1(I) chains. Interacts with MRC2 (PubMed:15817460). Interacts with TRAM2. Interacts with MFAP4 in a Ca (2+)-dependent manner.</text>
</comment>
<comment type="interaction">
    <interactant intactId="EBI-915744">
        <id>P02454</id>
    </interactant>
    <interactant intactId="EBI-1104992">
        <id>Q9UBG0</id>
        <label>MRC2</label>
    </interactant>
    <organismsDiffer>true</organismsDiffer>
    <experiments>2</experiments>
</comment>
<comment type="subcellular location">
    <subcellularLocation>
        <location evidence="8">Secreted</location>
        <location evidence="8">Extracellular space</location>
        <location evidence="8">Extracellular matrix</location>
    </subcellularLocation>
</comment>
<comment type="tissue specificity">
    <text>Forms the fibrils of tendon, ligaments and bones. In bones the fibrils are mineralized with calcium hydroxyapatite.</text>
</comment>
<comment type="domain">
    <text evidence="1">The C-terminal propeptide, also known as COLFI domain, have crucial roles in tissue growth and repair by controlling both the intracellular assembly of procollagen molecules and the extracellular assembly of collagen fibrils. It binds a calcium ion which is essential for its function.</text>
</comment>
<comment type="PTM">
    <text evidence="11">Contains mostly 4-hydroxyproline. Proline residues at the third position of the tripeptide repeating unit (G-X-Y) are hydroxylated in some or all of the chains.</text>
</comment>
<comment type="PTM">
    <text evidence="5">Contains 3-hydroxyproline at a few sites. This modification occurs on the first proline residue in the sequence motif Gly-Pro-Hyp, where Hyp is 4-hydroxyproline.</text>
</comment>
<comment type="PTM">
    <text evidence="4">Lysine residues at the third position of the tripeptide repeating unit (G-X-Y) are 5-hydroxylated in some or all of the chains.</text>
</comment>
<comment type="PTM">
    <text evidence="11">O-glycosylated on hydroxylated lysine residues. The O-linked glycan consists of a Glc-Gal disaccharide.</text>
</comment>
<comment type="similarity">
    <text evidence="8">Belongs to the fibrillar collagen family.</text>
</comment>
<accession>P02454</accession>
<accession>A3KNA1</accession>
<accession>P02455</accession>
<accession>Q63079</accession>
<name>CO1A1_RAT</name>
<organism>
    <name type="scientific">Rattus norvegicus</name>
    <name type="common">Rat</name>
    <dbReference type="NCBI Taxonomy" id="10116"/>
    <lineage>
        <taxon>Eukaryota</taxon>
        <taxon>Metazoa</taxon>
        <taxon>Chordata</taxon>
        <taxon>Craniata</taxon>
        <taxon>Vertebrata</taxon>
        <taxon>Euteleostomi</taxon>
        <taxon>Mammalia</taxon>
        <taxon>Eutheria</taxon>
        <taxon>Euarchontoglires</taxon>
        <taxon>Glires</taxon>
        <taxon>Rodentia</taxon>
        <taxon>Myomorpha</taxon>
        <taxon>Muroidea</taxon>
        <taxon>Muridae</taxon>
        <taxon>Murinae</taxon>
        <taxon>Rattus</taxon>
    </lineage>
</organism>
<evidence type="ECO:0000250" key="1"/>
<evidence type="ECO:0000250" key="2">
    <source>
        <dbReference type="UniProtKB" id="P02452"/>
    </source>
</evidence>
<evidence type="ECO:0000250" key="3">
    <source>
        <dbReference type="UniProtKB" id="P02453"/>
    </source>
</evidence>
<evidence type="ECO:0000250" key="4">
    <source>
        <dbReference type="UniProtKB" id="P02457"/>
    </source>
</evidence>
<evidence type="ECO:0000250" key="5">
    <source>
        <dbReference type="UniProtKB" id="P11087"/>
    </source>
</evidence>
<evidence type="ECO:0000255" key="6"/>
<evidence type="ECO:0000255" key="7">
    <source>
        <dbReference type="PROSITE-ProRule" id="PRU00220"/>
    </source>
</evidence>
<evidence type="ECO:0000255" key="8">
    <source>
        <dbReference type="PROSITE-ProRule" id="PRU00793"/>
    </source>
</evidence>
<evidence type="ECO:0000256" key="9">
    <source>
        <dbReference type="SAM" id="MobiDB-lite"/>
    </source>
</evidence>
<evidence type="ECO:0000269" key="10">
    <source>
    </source>
</evidence>
<evidence type="ECO:0000269" key="11">
    <source>
    </source>
</evidence>
<evidence type="ECO:0000269" key="12">
    <source>
    </source>
</evidence>
<evidence type="ECO:0000305" key="13"/>
<evidence type="ECO:0000305" key="14">
    <source>
    </source>
</evidence>
<evidence type="ECO:0007744" key="15">
    <source>
    </source>
</evidence>
<feature type="signal peptide" evidence="6">
    <location>
        <begin position="1"/>
        <end position="22"/>
    </location>
</feature>
<feature type="propeptide" id="PRO_0000043358" description="N-terminal propeptide" evidence="12">
    <location>
        <begin position="23"/>
        <end position="151"/>
    </location>
</feature>
<feature type="chain" id="PRO_0000043359" description="Collagen alpha-1(I) chain">
    <location>
        <begin position="152"/>
        <end position="1207"/>
    </location>
</feature>
<feature type="propeptide" id="PRO_0000043360" description="C-terminal propeptide" evidence="1">
    <location>
        <begin position="1208"/>
        <end position="1453"/>
    </location>
</feature>
<feature type="domain" description="VWFC" evidence="7">
    <location>
        <begin position="29"/>
        <end position="87"/>
    </location>
</feature>
<feature type="domain" description="Fibrillar collagen NC1" evidence="8">
    <location>
        <begin position="1218"/>
        <end position="1453"/>
    </location>
</feature>
<feature type="region of interest" description="Disordered" evidence="9">
    <location>
        <begin position="97"/>
        <end position="1206"/>
    </location>
</feature>
<feature type="region of interest" description="Nonhelical region (N-terminal)">
    <location>
        <begin position="152"/>
        <end position="167"/>
    </location>
</feature>
<feature type="region of interest" description="Triple-helical region">
    <location>
        <begin position="168"/>
        <end position="1181"/>
    </location>
</feature>
<feature type="region of interest" description="Major antigenic determinant (of neutral salt-extracted rat skin collagen)">
    <location>
        <begin position="1176"/>
        <end position="1186"/>
    </location>
</feature>
<feature type="region of interest" description="Nonhelical region (C-terminal)">
    <location>
        <begin position="1182"/>
        <end position="1207"/>
    </location>
</feature>
<feature type="short sequence motif" description="Cell attachment site" evidence="6">
    <location>
        <begin position="734"/>
        <end position="736"/>
    </location>
</feature>
<feature type="short sequence motif" description="Cell attachment site" evidence="6">
    <location>
        <begin position="1082"/>
        <end position="1084"/>
    </location>
</feature>
<feature type="compositionally biased region" description="Pro residues" evidence="9">
    <location>
        <begin position="109"/>
        <end position="118"/>
    </location>
</feature>
<feature type="compositionally biased region" description="Pro residues" evidence="9">
    <location>
        <begin position="128"/>
        <end position="143"/>
    </location>
</feature>
<feature type="compositionally biased region" description="Low complexity" evidence="9">
    <location>
        <begin position="187"/>
        <end position="206"/>
    </location>
</feature>
<feature type="compositionally biased region" description="Basic and acidic residues" evidence="9">
    <location>
        <begin position="218"/>
        <end position="232"/>
    </location>
</feature>
<feature type="compositionally biased region" description="Low complexity" evidence="9">
    <location>
        <begin position="307"/>
        <end position="320"/>
    </location>
</feature>
<feature type="compositionally biased region" description="Pro residues" evidence="9">
    <location>
        <begin position="322"/>
        <end position="334"/>
    </location>
</feature>
<feature type="compositionally biased region" description="Low complexity" evidence="9">
    <location>
        <begin position="335"/>
        <end position="361"/>
    </location>
</feature>
<feature type="compositionally biased region" description="Low complexity" evidence="9">
    <location>
        <begin position="368"/>
        <end position="418"/>
    </location>
</feature>
<feature type="compositionally biased region" description="Gly residues" evidence="9">
    <location>
        <begin position="474"/>
        <end position="483"/>
    </location>
</feature>
<feature type="compositionally biased region" description="Low complexity" evidence="9">
    <location>
        <begin position="527"/>
        <end position="566"/>
    </location>
</feature>
<feature type="compositionally biased region" description="Low complexity" evidence="9">
    <location>
        <begin position="623"/>
        <end position="650"/>
    </location>
</feature>
<feature type="compositionally biased region" description="Low complexity" evidence="9">
    <location>
        <begin position="685"/>
        <end position="695"/>
    </location>
</feature>
<feature type="compositionally biased region" description="Low complexity" evidence="9">
    <location>
        <begin position="703"/>
        <end position="716"/>
    </location>
</feature>
<feature type="compositionally biased region" description="Low complexity" evidence="9">
    <location>
        <begin position="773"/>
        <end position="787"/>
    </location>
</feature>
<feature type="compositionally biased region" description="Low complexity" evidence="9">
    <location>
        <begin position="800"/>
        <end position="815"/>
    </location>
</feature>
<feature type="compositionally biased region" description="Pro residues" evidence="9">
    <location>
        <begin position="829"/>
        <end position="841"/>
    </location>
</feature>
<feature type="compositionally biased region" description="Low complexity" evidence="9">
    <location>
        <begin position="842"/>
        <end position="872"/>
    </location>
</feature>
<feature type="compositionally biased region" description="Low complexity" evidence="9">
    <location>
        <begin position="901"/>
        <end position="910"/>
    </location>
</feature>
<feature type="compositionally biased region" description="Low complexity" evidence="9">
    <location>
        <begin position="920"/>
        <end position="935"/>
    </location>
</feature>
<feature type="compositionally biased region" description="Pro residues" evidence="9">
    <location>
        <begin position="985"/>
        <end position="995"/>
    </location>
</feature>
<feature type="compositionally biased region" description="Low complexity" evidence="9">
    <location>
        <begin position="997"/>
        <end position="1012"/>
    </location>
</feature>
<feature type="compositionally biased region" description="Pro residues" evidence="9">
    <location>
        <begin position="1031"/>
        <end position="1046"/>
    </location>
</feature>
<feature type="compositionally biased region" description="Low complexity" evidence="9">
    <location>
        <begin position="1067"/>
        <end position="1081"/>
    </location>
</feature>
<feature type="compositionally biased region" description="Basic and acidic residues" evidence="9">
    <location>
        <begin position="1082"/>
        <end position="1096"/>
    </location>
</feature>
<feature type="compositionally biased region" description="Low complexity" evidence="9">
    <location>
        <begin position="1102"/>
        <end position="1148"/>
    </location>
</feature>
<feature type="compositionally biased region" description="Pro residues" evidence="9">
    <location>
        <begin position="1166"/>
        <end position="1181"/>
    </location>
</feature>
<feature type="compositionally biased region" description="Basic and acidic residues" evidence="9">
    <location>
        <begin position="1197"/>
        <end position="1206"/>
    </location>
</feature>
<feature type="binding site" evidence="1">
    <location>
        <position position="1266"/>
    </location>
    <ligand>
        <name>Ca(2+)</name>
        <dbReference type="ChEBI" id="CHEBI:29108"/>
    </ligand>
</feature>
<feature type="binding site" evidence="1">
    <location>
        <position position="1268"/>
    </location>
    <ligand>
        <name>Ca(2+)</name>
        <dbReference type="ChEBI" id="CHEBI:29108"/>
    </ligand>
</feature>
<feature type="binding site" evidence="1">
    <location>
        <position position="1269"/>
    </location>
    <ligand>
        <name>Ca(2+)</name>
        <dbReference type="ChEBI" id="CHEBI:29108"/>
    </ligand>
</feature>
<feature type="binding site" evidence="1">
    <location>
        <position position="1271"/>
    </location>
    <ligand>
        <name>Ca(2+)</name>
        <dbReference type="ChEBI" id="CHEBI:29108"/>
    </ligand>
</feature>
<feature type="binding site" evidence="1">
    <location>
        <position position="1274"/>
    </location>
    <ligand>
        <name>Ca(2+)</name>
        <dbReference type="ChEBI" id="CHEBI:29108"/>
    </ligand>
</feature>
<feature type="modified residue" description="Pyrrolidone carboxylic acid" evidence="12">
    <location>
        <position position="152"/>
    </location>
</feature>
<feature type="modified residue" description="Allysine" evidence="12">
    <location>
        <position position="160"/>
    </location>
</feature>
<feature type="modified residue" description="Phosphoserine" evidence="15">
    <location>
        <position position="161"/>
    </location>
</feature>
<feature type="modified residue" description="4-hydroxyproline" evidence="14">
    <location>
        <position position="179"/>
    </location>
</feature>
<feature type="modified residue" description="4-hydroxyproline" evidence="14">
    <location>
        <position position="182"/>
    </location>
</feature>
<feature type="modified residue" description="4-hydroxyproline" evidence="14">
    <location>
        <position position="185"/>
    </location>
</feature>
<feature type="modified residue" description="4-hydroxyproline" evidence="14">
    <location>
        <position position="194"/>
    </location>
</feature>
<feature type="modified residue" description="4-hydroxyproline" evidence="14">
    <location>
        <position position="197"/>
    </location>
</feature>
<feature type="modified residue" description="4-hydroxyproline" evidence="14">
    <location>
        <position position="200"/>
    </location>
</feature>
<feature type="modified residue" description="4-hydroxyproline" evidence="4">
    <location>
        <position position="215"/>
    </location>
</feature>
<feature type="modified residue" description="4-hydroxyproline" evidence="4">
    <location>
        <position position="230"/>
    </location>
</feature>
<feature type="modified residue" description="4-hydroxyproline" evidence="4">
    <location>
        <position position="236"/>
    </location>
</feature>
<feature type="modified residue" description="4-hydroxyproline" evidence="4">
    <location>
        <position position="245"/>
    </location>
</feature>
<feature type="modified residue" description="4-hydroxyproline" evidence="4">
    <location>
        <position position="251"/>
    </location>
</feature>
<feature type="modified residue" description="5-hydroxylysine; alternate" evidence="11">
    <location>
        <position position="254"/>
    </location>
</feature>
<feature type="modified residue" description="Phosphoserine" evidence="15">
    <location>
        <position position="260"/>
    </location>
</feature>
<feature type="modified residue" description="4-hydroxyproline" evidence="4">
    <location>
        <position position="278"/>
    </location>
</feature>
<feature type="modified residue" description="4-hydroxyproline" evidence="4">
    <location>
        <position position="281"/>
    </location>
</feature>
<feature type="modified residue" description="4-hydroxyproline" evidence="4">
    <location>
        <position position="287"/>
    </location>
</feature>
<feature type="modified residue" description="4-hydroxyproline" evidence="4">
    <location>
        <position position="296"/>
    </location>
</feature>
<feature type="modified residue" description="4-hydroxyproline" evidence="4">
    <location>
        <position position="302"/>
    </location>
</feature>
<feature type="modified residue" description="4-hydroxyproline" evidence="4">
    <location>
        <position position="323"/>
    </location>
</feature>
<feature type="modified residue" description="4-hydroxyproline" evidence="4">
    <location>
        <position position="332"/>
    </location>
</feature>
<feature type="modified residue" description="4-hydroxyproline" evidence="4">
    <location>
        <position position="335"/>
    </location>
</feature>
<feature type="modified residue" description="4-hydroxyproline" evidence="4">
    <location>
        <position position="362"/>
    </location>
</feature>
<feature type="modified residue" description="4-hydroxyproline" evidence="4">
    <location>
        <position position="365"/>
    </location>
</feature>
<feature type="modified residue" description="4-hydroxyproline" evidence="4">
    <location>
        <position position="377"/>
    </location>
</feature>
<feature type="modified residue" description="4-hydroxyproline" evidence="4">
    <location>
        <position position="383"/>
    </location>
</feature>
<feature type="modified residue" description="4-hydroxyproline" evidence="4">
    <location>
        <position position="392"/>
    </location>
</feature>
<feature type="modified residue" description="4-hydroxyproline" evidence="4">
    <location>
        <position position="398"/>
    </location>
</feature>
<feature type="modified residue" description="4-hydroxyproline" evidence="4">
    <location>
        <position position="401"/>
    </location>
</feature>
<feature type="modified residue" description="4-hydroxyproline" evidence="4">
    <location>
        <position position="416"/>
    </location>
</feature>
<feature type="modified residue" description="5-hydroxylysine" evidence="4">
    <location>
        <position position="419"/>
    </location>
</feature>
<feature type="modified residue" description="4-hydroxyproline" evidence="4">
    <location>
        <position position="425"/>
    </location>
</feature>
<feature type="modified residue" description="4-hydroxyproline" evidence="4">
    <location>
        <position position="428"/>
    </location>
</feature>
<feature type="modified residue" description="4-hydroxyproline" evidence="4">
    <location>
        <position position="440"/>
    </location>
</feature>
<feature type="modified residue" description="4-hydroxyproline" evidence="4">
    <location>
        <position position="449"/>
    </location>
</feature>
<feature type="modified residue" description="4-hydroxyproline" evidence="4">
    <location>
        <position position="464"/>
    </location>
</feature>
<feature type="modified residue" description="4-hydroxyproline" evidence="4">
    <location>
        <position position="470"/>
    </location>
</feature>
<feature type="modified residue" description="4-hydroxyproline" evidence="4">
    <location>
        <position position="479"/>
    </location>
</feature>
<feature type="modified residue" description="4-hydroxyproline" evidence="4">
    <location>
        <position position="485"/>
    </location>
</feature>
<feature type="modified residue" description="5-hydroxylysine" evidence="4">
    <location>
        <position position="494"/>
    </location>
</feature>
<feature type="modified residue" description="4-hydroxyproline" evidence="4">
    <location>
        <position position="503"/>
    </location>
</feature>
<feature type="modified residue" description="4-hydroxyproline" evidence="4">
    <location>
        <position position="512"/>
    </location>
</feature>
<feature type="modified residue" description="4-hydroxyproline" evidence="4">
    <location>
        <position position="518"/>
    </location>
</feature>
<feature type="modified residue" description="4-hydroxyproline" evidence="4">
    <location>
        <position position="524"/>
    </location>
</feature>
<feature type="modified residue" description="4-hydroxyproline" evidence="4">
    <location>
        <position position="533"/>
    </location>
</feature>
<feature type="modified residue" description="4-hydroxyproline" evidence="4">
    <location>
        <position position="536"/>
    </location>
</feature>
<feature type="modified residue" description="4-hydroxyproline" evidence="4">
    <location>
        <position position="545"/>
    </location>
</feature>
<feature type="modified residue" description="4-hydroxyproline" evidence="4">
    <location>
        <position position="554"/>
    </location>
</feature>
<feature type="modified residue" description="4-hydroxyproline" evidence="4">
    <location>
        <position position="560"/>
    </location>
</feature>
<feature type="modified residue" description="4-hydroxyproline" evidence="4">
    <location>
        <position position="572"/>
    </location>
</feature>
<feature type="modified residue" description="4-hydroxyproline" evidence="4">
    <location>
        <position position="581"/>
    </location>
</feature>
<feature type="modified residue" description="4-hydroxyproline" evidence="4">
    <location>
        <position position="590"/>
    </location>
</feature>
<feature type="modified residue" description="4-hydroxyproline" evidence="4">
    <location>
        <position position="593"/>
    </location>
</feature>
<feature type="modified residue" description="4-hydroxyproline" evidence="4">
    <location>
        <position position="611"/>
    </location>
</feature>
<feature type="modified residue" description="4-hydroxyproline" evidence="4">
    <location>
        <position position="629"/>
    </location>
</feature>
<feature type="modified residue" description="4-hydroxyproline" evidence="4">
    <location>
        <position position="635"/>
    </location>
</feature>
<feature type="modified residue" description="4-hydroxyproline" evidence="4">
    <location>
        <position position="641"/>
    </location>
</feature>
<feature type="modified residue" description="4-hydroxyproline" evidence="4">
    <location>
        <position position="647"/>
    </location>
</feature>
<feature type="modified residue" description="4-hydroxyproline" evidence="4">
    <location>
        <position position="653"/>
    </location>
</feature>
<feature type="modified residue" description="4-hydroxyproline" evidence="4">
    <location>
        <position position="659"/>
    </location>
</feature>
<feature type="modified residue" description="4-hydroxyproline" evidence="4">
    <location>
        <position position="671"/>
    </location>
</feature>
<feature type="modified residue" description="4-hydroxyproline" evidence="4">
    <location>
        <position position="680"/>
    </location>
</feature>
<feature type="modified residue" description="4-hydroxyproline" evidence="4">
    <location>
        <position position="692"/>
    </location>
</feature>
<feature type="modified residue" description="4-hydroxyproline" evidence="4">
    <location>
        <position position="704"/>
    </location>
</feature>
<feature type="modified residue" description="4-hydroxyproline" evidence="4">
    <location>
        <position position="707"/>
    </location>
</feature>
<feature type="modified residue" description="4-hydroxyproline" evidence="4">
    <location>
        <position position="713"/>
    </location>
</feature>
<feature type="modified residue" description="4-hydroxyproline" evidence="4">
    <location>
        <position position="719"/>
    </location>
</feature>
<feature type="modified residue" description="4-hydroxyproline" evidence="4">
    <location>
        <position position="728"/>
    </location>
</feature>
<feature type="modified residue" description="5-hydroxylysine" evidence="4">
    <location>
        <position position="740"/>
    </location>
</feature>
<feature type="modified residue" description="4-hydroxyproline" evidence="4">
    <location>
        <position position="746"/>
    </location>
</feature>
<feature type="modified residue" description="4-hydroxyproline" evidence="4">
    <location>
        <position position="761"/>
    </location>
</feature>
<feature type="modified residue" description="4-hydroxyproline" evidence="4">
    <location>
        <position position="767"/>
    </location>
</feature>
<feature type="modified residue" description="Phosphoserine" evidence="15">
    <location>
        <position position="776"/>
    </location>
</feature>
<feature type="modified residue" description="4-hydroxyproline" evidence="4">
    <location>
        <position position="788"/>
    </location>
</feature>
<feature type="modified residue" description="4-hydroxyproline" evidence="4">
    <location>
        <position position="794"/>
    </location>
</feature>
<feature type="modified residue" description="4-hydroxyproline" evidence="4">
    <location>
        <position position="797"/>
    </location>
</feature>
<feature type="modified residue" description="4-hydroxyproline" evidence="4">
    <location>
        <position position="806"/>
    </location>
</feature>
<feature type="modified residue" description="4-hydroxyproline" evidence="4">
    <location>
        <position position="812"/>
    </location>
</feature>
<feature type="modified residue" description="4-hydroxyproline" evidence="4">
    <location>
        <position position="830"/>
    </location>
</feature>
<feature type="modified residue" description="4-hydroxyproline" evidence="4">
    <location>
        <position position="839"/>
    </location>
</feature>
<feature type="modified residue" description="4-hydroxyproline" evidence="4">
    <location>
        <position position="848"/>
    </location>
</feature>
<feature type="modified residue" description="5-hydroxylysine" evidence="4">
    <location>
        <position position="851"/>
    </location>
</feature>
<feature type="modified residue" description="4-hydroxyproline" evidence="4">
    <location>
        <position position="860"/>
    </location>
</feature>
<feature type="modified residue" description="4-hydroxyproline" evidence="4">
    <location>
        <position position="866"/>
    </location>
</feature>
<feature type="modified residue" description="3-hydroxyproline" evidence="5">
    <location>
        <position position="874"/>
    </location>
</feature>
<feature type="modified residue" description="4-hydroxyproline" evidence="5">
    <location>
        <position position="875"/>
    </location>
</feature>
<feature type="modified residue" description="4-hydroxyproline" evidence="5">
    <location>
        <position position="884"/>
    </location>
</feature>
<feature type="modified residue" description="4-hydroxyproline" evidence="5">
    <location>
        <position position="887"/>
    </location>
</feature>
<feature type="modified residue" description="4-hydroxyproline" evidence="4">
    <location>
        <position position="908"/>
    </location>
</feature>
<feature type="modified residue" description="4-hydroxyproline" evidence="4">
    <location>
        <position position="917"/>
    </location>
</feature>
<feature type="modified residue" description="4-hydroxyproline" evidence="4">
    <location>
        <position position="926"/>
    </location>
</feature>
<feature type="modified residue" description="4-hydroxyproline" evidence="4">
    <location>
        <position position="935"/>
    </location>
</feature>
<feature type="modified residue" description="4-hydroxyproline" evidence="4">
    <location>
        <position position="953"/>
    </location>
</feature>
<feature type="modified residue" description="4-hydroxyproline" evidence="4">
    <location>
        <position position="962"/>
    </location>
</feature>
<feature type="modified residue" description="4-hydroxyproline" evidence="4">
    <location>
        <position position="965"/>
    </location>
</feature>
<feature type="modified residue" description="4-hydroxyproline" evidence="4">
    <location>
        <position position="971"/>
    </location>
</feature>
<feature type="modified residue" description="4-hydroxyproline" evidence="4">
    <location>
        <position position="986"/>
    </location>
</feature>
<feature type="modified residue" description="4-hydroxyproline" evidence="4">
    <location>
        <position position="992"/>
    </location>
</feature>
<feature type="modified residue" description="4-hydroxyproline" evidence="4">
    <location>
        <position position="998"/>
    </location>
</feature>
<feature type="modified residue" description="4-hydroxyproline" evidence="4">
    <location>
        <position position="1007"/>
    </location>
</feature>
<feature type="modified residue" description="4-hydroxyproline" evidence="4">
    <location>
        <position position="1013"/>
    </location>
</feature>
<feature type="modified residue" description="5-hydroxylysine" evidence="4">
    <location>
        <position position="1022"/>
    </location>
</feature>
<feature type="modified residue" description="4-hydroxyproline" evidence="4">
    <location>
        <position position="1034"/>
    </location>
</feature>
<feature type="modified residue" description="4-hydroxyproline" evidence="4">
    <location>
        <position position="1037"/>
    </location>
</feature>
<feature type="modified residue" description="4-hydroxyproline" evidence="4">
    <location>
        <position position="1040"/>
    </location>
</feature>
<feature type="modified residue" description="5-hydroxylysine" evidence="4">
    <location>
        <position position="1085"/>
    </location>
</feature>
<feature type="modified residue" description="5-hydroxylysine; alternate" evidence="5">
    <location>
        <position position="1097"/>
    </location>
</feature>
<feature type="modified residue" description="4-hydroxyproline" evidence="4">
    <location>
        <position position="1109"/>
    </location>
</feature>
<feature type="modified residue" description="4-hydroxyproline" evidence="4">
    <location>
        <position position="1112"/>
    </location>
</feature>
<feature type="modified residue" description="4-hydroxyproline" evidence="4">
    <location>
        <position position="1115"/>
    </location>
</feature>
<feature type="modified residue" description="4-hydroxyproline" evidence="4">
    <location>
        <position position="1133"/>
    </location>
</feature>
<feature type="modified residue" description="4-hydroxyproline" evidence="5">
    <location>
        <position position="1148"/>
    </location>
</feature>
<feature type="modified residue" description="3-hydroxyproline" evidence="5">
    <location>
        <position position="1153"/>
    </location>
</feature>
<feature type="modified residue" description="4-hydroxyproline" evidence="5">
    <location>
        <position position="1154"/>
    </location>
</feature>
<feature type="modified residue" description="3-hydroxyproline" evidence="5">
    <location>
        <position position="1168"/>
    </location>
</feature>
<feature type="modified residue" description="4-hydroxyproline" evidence="5">
    <location>
        <position position="1169"/>
    </location>
</feature>
<feature type="modified residue" description="3-hydroxyproline" evidence="5">
    <location>
        <position position="1171"/>
    </location>
</feature>
<feature type="modified residue" description="4-hydroxyproline" evidence="5">
    <location>
        <position position="1172"/>
    </location>
</feature>
<feature type="modified residue" description="3-hydroxyproline" evidence="5">
    <location>
        <position position="1174"/>
    </location>
</feature>
<feature type="modified residue" description="4-hydroxyproline" evidence="5">
    <location>
        <position position="1175"/>
    </location>
</feature>
<feature type="modified residue" description="4-hydroxyproline" evidence="5">
    <location>
        <position position="1178"/>
    </location>
</feature>
<feature type="modified residue" description="4-hydroxyproline" evidence="5">
    <location>
        <position position="1181"/>
    </location>
</feature>
<feature type="modified residue" description="Allysine" evidence="3">
    <location>
        <position position="1197"/>
    </location>
</feature>
<feature type="glycosylation site" description="N-linked (GlcNAc...) asparagine" evidence="6">
    <location>
        <position position="56"/>
    </location>
</feature>
<feature type="glycosylation site" description="O-linked (Gal...) hydroxylysine; alternate" evidence="11">
    <location>
        <position position="254"/>
    </location>
</feature>
<feature type="glycosylation site" description="O-linked (Gal...) hydroxylysine; alternate" evidence="4">
    <location>
        <position position="1097"/>
    </location>
</feature>
<feature type="glycosylation site" description="N-linked (GlcNAc...) asparagine" evidence="6">
    <location>
        <position position="1354"/>
    </location>
</feature>
<feature type="disulfide bond" evidence="8">
    <location>
        <begin position="1248"/>
        <end position="1280"/>
    </location>
</feature>
<feature type="disulfide bond" description="Interchain (with C-1271)" evidence="8">
    <location>
        <position position="1254"/>
    </location>
</feature>
<feature type="disulfide bond" description="Interchain (with C-1254)" evidence="8">
    <location>
        <position position="1271"/>
    </location>
</feature>
<feature type="disulfide bond" evidence="8">
    <location>
        <begin position="1288"/>
        <end position="1451"/>
    </location>
</feature>
<feature type="disulfide bond" evidence="8">
    <location>
        <begin position="1359"/>
        <end position="1404"/>
    </location>
</feature>
<feature type="sequence conflict" description="In Ref. 1; CAB01633." evidence="13" ref="1">
    <original>P</original>
    <variation>L</variation>
    <location>
        <position position="143"/>
    </location>
</feature>
<feature type="sequence conflict" description="In Ref. 1; CAB01633." evidence="13" ref="1">
    <original>A</original>
    <variation>G</variation>
    <location>
        <position position="202"/>
    </location>
</feature>
<feature type="sequence conflict" description="In Ref. 1; CAB01633." evidence="13" ref="1">
    <original>R</original>
    <variation>P</variation>
    <location>
        <position position="209"/>
    </location>
</feature>
<feature type="sequence conflict" description="In Ref. 7; AA sequence." evidence="13" ref="7">
    <original>E</original>
    <variation>Q</variation>
    <location>
        <position position="232"/>
    </location>
</feature>
<feature type="sequence conflict" description="In Ref. 8; AA sequence." evidence="13" ref="8">
    <original>D</original>
    <variation>N</variation>
    <location>
        <position position="268"/>
    </location>
</feature>
<feature type="sequence conflict" description="In Ref. 1; CAB01633." evidence="13" ref="1">
    <original>A</original>
    <variation>T</variation>
    <location>
        <position position="286"/>
    </location>
</feature>
<feature type="sequence conflict" description="In Ref. 1; CAB01633." evidence="13" ref="1">
    <original>S</original>
    <variation>T</variation>
    <location>
        <position position="307"/>
    </location>
</feature>
<feature type="sequence conflict" description="In Ref. 9; AA sequence." evidence="13" ref="9">
    <original>N</original>
    <variation>D</variation>
    <location>
        <position position="313"/>
    </location>
</feature>
<feature type="sequence conflict" description="In Ref. 1; CAB01633." evidence="13" ref="1">
    <original>N</original>
    <variation>T</variation>
    <location>
        <position position="421"/>
    </location>
</feature>
<feature type="sequence conflict" description="In Ref. 1; CAB01633." evidence="13" ref="1">
    <original>A</original>
    <variation>S</variation>
    <location>
        <position position="497"/>
    </location>
</feature>
<feature type="sequence conflict" description="In Ref. 1; CAB01633." evidence="13" ref="1">
    <original>T</original>
    <variation>A</variation>
    <location>
        <position position="773"/>
    </location>
</feature>
<feature type="sequence conflict" description="In Ref. 1; CAB01633." evidence="13" ref="1">
    <original>P</original>
    <variation>A</variation>
    <location>
        <position position="794"/>
    </location>
</feature>
<feature type="sequence conflict" description="In Ref. 1; CAB01633." evidence="13" ref="1">
    <original>E</original>
    <variation>K</variation>
    <location>
        <position position="958"/>
    </location>
</feature>
<feature type="sequence conflict" description="In Ref. 13; AA sequence." evidence="13" ref="13">
    <original>S</original>
    <variation>P</variation>
    <location>
        <position position="1111"/>
    </location>
</feature>
<feature type="sequence conflict" description="In Ref. 13; AA sequence." evidence="13" ref="13">
    <original>S</original>
    <variation>A</variation>
    <location>
        <position position="1163"/>
    </location>
</feature>
<feature type="sequence conflict" description="In Ref. 13; AA sequence." evidence="13" ref="13">
    <original>A</original>
    <variation>S</variation>
    <location>
        <position position="1166"/>
    </location>
</feature>
<feature type="sequence conflict" description="In Ref. 14; AA sequence." evidence="13" ref="14">
    <original>F</original>
    <variation>L</variation>
    <location>
        <position position="1187"/>
    </location>
</feature>
<feature type="sequence conflict" description="In Ref. 14; AA sequence." evidence="13" ref="14">
    <original>L</original>
    <variation>F</variation>
    <location>
        <position position="1190"/>
    </location>
</feature>
<gene>
    <name type="primary">Col1a1</name>
</gene>
<reference key="1">
    <citation type="journal article" date="1999" name="J. Dent. Res.">
        <title>Expression of collagen alpha1(I) mRNA variants during tooth and bone formation in the rat.</title>
        <authorList>
            <person name="Brandsten C."/>
            <person name="Lundmark C."/>
            <person name="Christersson C."/>
            <person name="Hammarstroem L."/>
            <person name="Wurtz T."/>
        </authorList>
    </citation>
    <scope>NUCLEOTIDE SEQUENCE [MRNA]</scope>
    <source>
        <strain>Sprague-Dawley</strain>
        <tissue>Bone</tissue>
        <tissue>Tooth</tissue>
    </source>
</reference>
<reference key="2">
    <citation type="submission" date="2005-07" db="EMBL/GenBank/DDBJ databases">
        <authorList>
            <person name="Mural R.J."/>
            <person name="Adams M.D."/>
            <person name="Myers E.W."/>
            <person name="Smith H.O."/>
            <person name="Venter J.C."/>
        </authorList>
    </citation>
    <scope>NUCLEOTIDE SEQUENCE [LARGE SCALE GENOMIC DNA]</scope>
    <source>
        <strain>Brown Norway</strain>
    </source>
</reference>
<reference key="3">
    <citation type="journal article" date="2004" name="Genome Res.">
        <title>The status, quality, and expansion of the NIH full-length cDNA project: the Mammalian Gene Collection (MGC).</title>
        <authorList>
            <consortium name="The MGC Project Team"/>
        </authorList>
    </citation>
    <scope>NUCLEOTIDE SEQUENCE [LARGE SCALE MRNA]</scope>
    <source>
        <strain>Brown Norway</strain>
        <tissue>Lung</tissue>
    </source>
</reference>
<reference key="4">
    <citation type="journal article" date="1969" name="Biochemistry">
        <title>Comparative sequence studies of rat skin and tendon collagen. II. The absence of a short sequence at the amino terminus of the skin alpha-1 chain.</title>
        <authorList>
            <person name="Bornstein P."/>
        </authorList>
    </citation>
    <scope>PROTEIN SEQUENCE OF 152-170</scope>
    <scope>ALLYSINE AT LYS-160</scope>
    <scope>PYROGLUTAMATE FORMATION AT GLN-152</scope>
</reference>
<reference key="5">
    <citation type="journal article" date="1967" name="Biochemistry">
        <title>The amino acid sequence of peptides from the cross-linking region of rat skin collagen.</title>
        <authorList>
            <person name="Kang A.H."/>
            <person name="Bornstein P."/>
            <person name="Piez K.A."/>
        </authorList>
    </citation>
    <scope>PROTEIN SEQUENCE OF 156-170</scope>
</reference>
<reference key="6">
    <citation type="journal article" date="1967" name="J. Biol. Chem.">
        <title>The incomplete hydroxylation of individual prolyl residues in collagen.</title>
        <authorList>
            <person name="Bornstein P."/>
        </authorList>
    </citation>
    <scope>PROTEIN SEQUENCE OF 171-206</scope>
    <scope>HYDROXYLATION AT PRO-179; PRO-182; PRO-185; PRO-194; PRO-197 AND PRO-200</scope>
</reference>
<reference key="7">
    <citation type="journal article" date="1971" name="Biochemistry">
        <title>Chemical studies on the cyanogen bromide peptides of rat skin collagen. Amino acid sequence of alpha 1-CB4.</title>
        <authorList>
            <person name="Butler W.T."/>
            <person name="Ponds S.L."/>
        </authorList>
    </citation>
    <scope>PROTEIN SEQUENCE OF 207-253</scope>
</reference>
<reference key="8">
    <citation type="journal article" date="1970" name="Biochemistry">
        <title>Chemical studies on the cyanogen bromide peptides of rat skin collagen. The covalent structure of alpha 1-CB5, the major hexose-containing cyanogen bromide peptide of alpha 1.</title>
        <authorList>
            <person name="Butler W.T."/>
        </authorList>
    </citation>
    <scope>PROTEIN SEQUENCE OF 254-290</scope>
    <scope>HYDROXYLATION AT LYS-254</scope>
    <scope>GLYCOSYLATION AT LYS-254</scope>
</reference>
<reference key="9">
    <citation type="journal article" date="1971" name="Biochemistry">
        <title>Structure of rat skin collagen alpha 1-CB8. Amino acid sequence of the hydroxylamine-produced fragment HA1.</title>
        <authorList>
            <person name="Balian G."/>
            <person name="Click E.M."/>
            <person name="Bornstein P."/>
        </authorList>
    </citation>
    <scope>PROTEIN SEQUENCE OF 291-389</scope>
</reference>
<reference key="10">
    <citation type="journal article" date="1972" name="Biochemistry">
        <title>Structure of rat skin collagen alpha 1-CBB. Amino acid sequence of the hydroxyl amine-produced fragment HA2.</title>
        <authorList>
            <person name="Balian G."/>
            <person name="Click E.M."/>
            <person name="Hermodson M.A."/>
            <person name="Bornstein P."/>
        </authorList>
    </citation>
    <scope>PROTEIN SEQUENCE OF 390-569</scope>
</reference>
<reference key="11">
    <citation type="journal article" date="1974" name="Biochemistry">
        <title>Chemical studies on the cyanogen bromide peptides of rat skin collagen. Amino acid sequence of alpha 1-CB3.</title>
        <authorList>
            <person name="Butler W.T."/>
            <person name="Underwood S.P."/>
            <person name="Finch J.E. Jr."/>
        </authorList>
    </citation>
    <scope>PROTEIN SEQUENCE OF 570-718</scope>
</reference>
<reference key="12">
    <citation type="journal article" date="1984" name="Biochemistry">
        <title>Construction of DNA sequences complementary to rat alpha 1 and alpha 2 collagen mRNA and their use in studying the regulation of type I collagen synthesis by 1,25-dihydroxyvitamin D.</title>
        <authorList>
            <person name="Genovese C."/>
            <person name="Rowe D."/>
            <person name="Kream B."/>
        </authorList>
    </citation>
    <scope>NUCLEOTIDE SEQUENCE [MRNA] OF 680-718</scope>
</reference>
<reference key="13">
    <citation type="journal article" date="1973" name="Eur. J. Biochem.">
        <title>Structural and immunogenic properties of a major antigenic determinant in neutral salt-extracted rat-skin collagen.</title>
        <authorList>
            <person name="Stoltz M."/>
            <person name="Timpl R."/>
            <person name="Furthmayr H."/>
            <person name="Kuehn K."/>
        </authorList>
    </citation>
    <scope>PROTEIN SEQUENCE OF 1103-1186</scope>
</reference>
<reference key="14">
    <citation type="journal article" date="1972" name="FEBS Lett.">
        <title>Non-helical regions in rat collagen alpha 1-chain.</title>
        <authorList>
            <person name="Stoltz M."/>
            <person name="Timpl R."/>
            <person name="Kuehn K."/>
        </authorList>
    </citation>
    <scope>PROTEIN SEQUENCE OF 1186-1206</scope>
</reference>
<reference key="15">
    <citation type="journal article" date="2005" name="J. Biol. Chem.">
        <title>Endo180 binds to the C-terminal region of type I collagen.</title>
        <authorList>
            <person name="Thomas E.K."/>
            <person name="Nakamura M."/>
            <person name="Wienke D."/>
            <person name="Isacke C.M."/>
            <person name="Pozzi A."/>
            <person name="Liang P."/>
        </authorList>
    </citation>
    <scope>INTERACTION WITH MRC2</scope>
    <source>
        <strain>Sprague-Dawley</strain>
    </source>
</reference>
<reference key="16">
    <citation type="journal article" date="2009" name="Process Biochem.">
        <title>A new procedure for rapid, high yield purification of Type I collagen for tissue engineering.</title>
        <authorList>
            <person name="Xiong X."/>
            <person name="Ghosh R."/>
            <person name="Hiller E."/>
            <person name="Drepper F."/>
            <person name="Knapp B."/>
            <person name="Brunner H."/>
            <person name="Rupp S."/>
        </authorList>
    </citation>
    <scope>IDENTIFICATION BY MASS SPECTROMETRY</scope>
    <scope>PHOSPHORYLATION</scope>
</reference>
<reference key="17">
    <citation type="journal article" date="2012" name="Nat. Commun.">
        <title>Quantitative maps of protein phosphorylation sites across 14 different rat organs and tissues.</title>
        <authorList>
            <person name="Lundby A."/>
            <person name="Secher A."/>
            <person name="Lage K."/>
            <person name="Nordsborg N.B."/>
            <person name="Dmytriyev A."/>
            <person name="Lundby C."/>
            <person name="Olsen J.V."/>
        </authorList>
    </citation>
    <scope>PHOSPHORYLATION [LARGE SCALE ANALYSIS] AT SER-161; SER-260 AND SER-776</scope>
    <scope>IDENTIFICATION BY MASS SPECTROMETRY [LARGE SCALE ANALYSIS]</scope>
</reference>
<reference key="18">
    <citation type="journal article" date="2006" name="Proc. Natl. Acad. Sci. U.S.A.">
        <title>Microfibrillar structure of type I collagen in situ.</title>
        <authorList>
            <person name="Orgel J.P.R.O."/>
            <person name="Irving T.C."/>
            <person name="Miller A."/>
            <person name="Wess T.J."/>
        </authorList>
    </citation>
    <scope>X-RAY CRYSTALLOGRAPHY (5.16 ANGSTROMS) OF 152-1207</scope>
</reference>